<keyword id="KW-0025">Alternative splicing</keyword>
<keyword id="KW-0965">Cell junction</keyword>
<keyword id="KW-1003">Cell membrane</keyword>
<keyword id="KW-0966">Cell projection</keyword>
<keyword id="KW-1015">Disulfide bond</keyword>
<keyword id="KW-0297">G-protein coupled receptor</keyword>
<keyword id="KW-0325">Glycoprotein</keyword>
<keyword id="KW-0430">Lectin</keyword>
<keyword id="KW-0472">Membrane</keyword>
<keyword id="KW-0479">Metal-binding</keyword>
<keyword id="KW-0597">Phosphoprotein</keyword>
<keyword id="KW-0628">Postsynaptic cell membrane</keyword>
<keyword id="KW-0675">Receptor</keyword>
<keyword id="KW-1185">Reference proteome</keyword>
<keyword id="KW-0732">Signal</keyword>
<keyword id="KW-0770">Synapse</keyword>
<keyword id="KW-0807">Transducer</keyword>
<keyword id="KW-0812">Transmembrane</keyword>
<keyword id="KW-1133">Transmembrane helix</keyword>
<gene>
    <name evidence="12" type="primary">Adgrl3</name>
    <name evidence="9" type="synonym">Cirl3</name>
    <name evidence="10" type="synonym">Cl3</name>
    <name evidence="12" type="synonym">Lphn3</name>
</gene>
<reference key="1">
    <citation type="journal article" date="1998" name="J. Biol. Chem.">
        <title>Alpha-latrotoxin receptor CIRL/latrophilin 1 (CL1) defines an unusual family of ubiquitous G-protein-linked receptors. G-protein coupling not required for triggering exocytosis.</title>
        <authorList>
            <person name="Sugita S."/>
            <person name="Ichtchenko K."/>
            <person name="Khvotchev M."/>
            <person name="Suedhof T.C."/>
        </authorList>
    </citation>
    <scope>NUCLEOTIDE SEQUENCE [MRNA] (ISOFORMS 2; 3; 4; 5; 6 AND 7)</scope>
</reference>
<reference key="2">
    <citation type="journal article" date="1999" name="J. Biol. Chem.">
        <title>A novel ubiquitously expressed alpha-latrotoxin receptor is a member of the CIRL family of G-protein-coupled receptors.</title>
        <authorList>
            <person name="Ichtchenko K."/>
            <person name="Bittner M.A."/>
            <person name="Krasnoperov V."/>
            <person name="Little A.R."/>
            <person name="Chepurny O."/>
            <person name="Holz R.W."/>
            <person name="Petrenko A.G."/>
        </authorList>
    </citation>
    <scope>NUCLEOTIDE SEQUENCE [MRNA] (ISOFORM 1)</scope>
    <scope>TISSUE SPECIFICITY</scope>
</reference>
<reference key="3">
    <citation type="journal article" date="2012" name="Neuron">
        <title>FLRT proteins are endogenous latrophilin ligands and regulate excitatory synapse development.</title>
        <authorList>
            <person name="O'Sullivan M.L."/>
            <person name="de Wit J."/>
            <person name="Savas J.N."/>
            <person name="Comoletti D."/>
            <person name="Otto-Hitt S."/>
            <person name="Yates J.R. III"/>
            <person name="Ghosh A."/>
        </authorList>
    </citation>
    <scope>INTERACTION WITH FLRT3</scope>
    <scope>IDENTIFICATION BY MASS SPECTROMETRY</scope>
</reference>
<proteinExistence type="evidence at protein level"/>
<dbReference type="EMBL" id="AF081154">
    <property type="protein sequence ID" value="AAC62660.1"/>
    <property type="molecule type" value="mRNA"/>
</dbReference>
<dbReference type="EMBL" id="AF081155">
    <property type="protein sequence ID" value="AAC62661.1"/>
    <property type="molecule type" value="mRNA"/>
</dbReference>
<dbReference type="EMBL" id="AF081156">
    <property type="protein sequence ID" value="AAC62662.1"/>
    <property type="molecule type" value="mRNA"/>
</dbReference>
<dbReference type="EMBL" id="AF081157">
    <property type="protein sequence ID" value="AAC62663.1"/>
    <property type="molecule type" value="mRNA"/>
</dbReference>
<dbReference type="EMBL" id="AF081158">
    <property type="protein sequence ID" value="AAC62664.1"/>
    <property type="molecule type" value="mRNA"/>
</dbReference>
<dbReference type="EMBL" id="AF081159">
    <property type="protein sequence ID" value="AAC62665.1"/>
    <property type="molecule type" value="mRNA"/>
</dbReference>
<dbReference type="EMBL" id="AF063103">
    <property type="protein sequence ID" value="AAC77816.1"/>
    <property type="molecule type" value="mRNA"/>
</dbReference>
<dbReference type="PIR" id="T14327">
    <property type="entry name" value="T14327"/>
</dbReference>
<dbReference type="PIR" id="T17186">
    <property type="entry name" value="T17186"/>
</dbReference>
<dbReference type="PIR" id="T17187">
    <property type="entry name" value="T17187"/>
</dbReference>
<dbReference type="PIR" id="T17188">
    <property type="entry name" value="T17188"/>
</dbReference>
<dbReference type="PIR" id="T17198">
    <property type="entry name" value="T17198"/>
</dbReference>
<dbReference type="PIR" id="T17199">
    <property type="entry name" value="T17199"/>
</dbReference>
<dbReference type="PIR" id="T17200">
    <property type="entry name" value="T17200"/>
</dbReference>
<dbReference type="RefSeq" id="NP_570835.1">
    <property type="nucleotide sequence ID" value="NM_130822.1"/>
</dbReference>
<dbReference type="SMR" id="Q9Z173"/>
<dbReference type="BioGRID" id="250970">
    <property type="interactions" value="1"/>
</dbReference>
<dbReference type="FunCoup" id="Q9Z173">
    <property type="interactions" value="3762"/>
</dbReference>
<dbReference type="STRING" id="10116.ENSRNOP00000045365"/>
<dbReference type="GuidetoPHARMACOLOGY" id="208"/>
<dbReference type="MEROPS" id="P02.011"/>
<dbReference type="GlyCosmos" id="Q9Z173">
    <property type="glycosylation" value="8 sites, No reported glycans"/>
</dbReference>
<dbReference type="GlyGen" id="Q9Z173">
    <property type="glycosylation" value="8 sites"/>
</dbReference>
<dbReference type="iPTMnet" id="Q9Z173"/>
<dbReference type="PhosphoSitePlus" id="Q9Z173"/>
<dbReference type="PaxDb" id="10116-ENSRNOP00000056687"/>
<dbReference type="GeneID" id="170641"/>
<dbReference type="KEGG" id="rno:170641"/>
<dbReference type="AGR" id="RGD:620836"/>
<dbReference type="CTD" id="23284"/>
<dbReference type="RGD" id="620836">
    <property type="gene designation" value="Adgrl3"/>
</dbReference>
<dbReference type="eggNOG" id="KOG3545">
    <property type="taxonomic scope" value="Eukaryota"/>
</dbReference>
<dbReference type="eggNOG" id="KOG4193">
    <property type="taxonomic scope" value="Eukaryota"/>
</dbReference>
<dbReference type="eggNOG" id="KOG4729">
    <property type="taxonomic scope" value="Eukaryota"/>
</dbReference>
<dbReference type="InParanoid" id="Q9Z173"/>
<dbReference type="OrthoDB" id="6437696at2759"/>
<dbReference type="PhylomeDB" id="Q9Z173"/>
<dbReference type="PRO" id="PR:Q9Z173"/>
<dbReference type="Proteomes" id="UP000002494">
    <property type="component" value="Unplaced"/>
</dbReference>
<dbReference type="GO" id="GO:0030424">
    <property type="term" value="C:axon"/>
    <property type="evidence" value="ECO:0000250"/>
    <property type="project" value="UniProtKB"/>
</dbReference>
<dbReference type="GO" id="GO:0005911">
    <property type="term" value="C:cell-cell junction"/>
    <property type="evidence" value="ECO:0000250"/>
    <property type="project" value="UniProtKB"/>
</dbReference>
<dbReference type="GO" id="GO:0098978">
    <property type="term" value="C:glutamatergic synapse"/>
    <property type="evidence" value="ECO:0000266"/>
    <property type="project" value="RGD"/>
</dbReference>
<dbReference type="GO" id="GO:0005886">
    <property type="term" value="C:plasma membrane"/>
    <property type="evidence" value="ECO:0000250"/>
    <property type="project" value="UniProtKB"/>
</dbReference>
<dbReference type="GO" id="GO:0045211">
    <property type="term" value="C:postsynaptic membrane"/>
    <property type="evidence" value="ECO:0000266"/>
    <property type="project" value="RGD"/>
</dbReference>
<dbReference type="GO" id="GO:0098685">
    <property type="term" value="C:Schaffer collateral - CA1 synapse"/>
    <property type="evidence" value="ECO:0000266"/>
    <property type="project" value="RGD"/>
</dbReference>
<dbReference type="GO" id="GO:0005509">
    <property type="term" value="F:calcium ion binding"/>
    <property type="evidence" value="ECO:0000250"/>
    <property type="project" value="UniProtKB"/>
</dbReference>
<dbReference type="GO" id="GO:0030246">
    <property type="term" value="F:carbohydrate binding"/>
    <property type="evidence" value="ECO:0007669"/>
    <property type="project" value="UniProtKB-KW"/>
</dbReference>
<dbReference type="GO" id="GO:0098631">
    <property type="term" value="F:cell adhesion mediator activity"/>
    <property type="evidence" value="ECO:0000250"/>
    <property type="project" value="UniProtKB"/>
</dbReference>
<dbReference type="GO" id="GO:0004930">
    <property type="term" value="F:G protein-coupled receptor activity"/>
    <property type="evidence" value="ECO:0000250"/>
    <property type="project" value="UniProtKB"/>
</dbReference>
<dbReference type="GO" id="GO:0007189">
    <property type="term" value="P:adenylate cyclase-activating G protein-coupled receptor signaling pathway"/>
    <property type="evidence" value="ECO:0000318"/>
    <property type="project" value="GO_Central"/>
</dbReference>
<dbReference type="GO" id="GO:0007166">
    <property type="term" value="P:cell surface receptor signaling pathway"/>
    <property type="evidence" value="ECO:0007669"/>
    <property type="project" value="InterPro"/>
</dbReference>
<dbReference type="GO" id="GO:0098742">
    <property type="term" value="P:cell-cell adhesion via plasma-membrane adhesion molecules"/>
    <property type="evidence" value="ECO:0000250"/>
    <property type="project" value="UniProtKB"/>
</dbReference>
<dbReference type="GO" id="GO:1904861">
    <property type="term" value="P:excitatory synapse assembly"/>
    <property type="evidence" value="ECO:0000250"/>
    <property type="project" value="UniProtKB"/>
</dbReference>
<dbReference type="GO" id="GO:0031987">
    <property type="term" value="P:locomotion involved in locomotory behavior"/>
    <property type="evidence" value="ECO:0000266"/>
    <property type="project" value="RGD"/>
</dbReference>
<dbReference type="GO" id="GO:0098880">
    <property type="term" value="P:maintenance of postsynaptic specialization structure"/>
    <property type="evidence" value="ECO:0000266"/>
    <property type="project" value="RGD"/>
</dbReference>
<dbReference type="GO" id="GO:0001764">
    <property type="term" value="P:neuron migration"/>
    <property type="evidence" value="ECO:0000250"/>
    <property type="project" value="UniProtKB"/>
</dbReference>
<dbReference type="GO" id="GO:0051965">
    <property type="term" value="P:positive regulation of synapse assembly"/>
    <property type="evidence" value="ECO:0000266"/>
    <property type="project" value="RGD"/>
</dbReference>
<dbReference type="GO" id="GO:0042220">
    <property type="term" value="P:response to cocaine"/>
    <property type="evidence" value="ECO:0000266"/>
    <property type="project" value="RGD"/>
</dbReference>
<dbReference type="GO" id="GO:0160221">
    <property type="term" value="P:Rho-activating G protein-coupled receptor signaling pathway"/>
    <property type="evidence" value="ECO:0000250"/>
    <property type="project" value="UniProtKB"/>
</dbReference>
<dbReference type="GO" id="GO:0007416">
    <property type="term" value="P:synapse assembly"/>
    <property type="evidence" value="ECO:0000250"/>
    <property type="project" value="UniProtKB"/>
</dbReference>
<dbReference type="GO" id="GO:0050808">
    <property type="term" value="P:synapse organization"/>
    <property type="evidence" value="ECO:0000266"/>
    <property type="project" value="RGD"/>
</dbReference>
<dbReference type="CDD" id="cd16005">
    <property type="entry name" value="7tmB2_Latrophilin-3"/>
    <property type="match status" value="1"/>
</dbReference>
<dbReference type="CDD" id="cd22846">
    <property type="entry name" value="Gal_Rha_Lectin_LPHN3"/>
    <property type="match status" value="1"/>
</dbReference>
<dbReference type="FunFam" id="1.20.1070.10:FF:000011">
    <property type="entry name" value="Adhesion G protein-coupled receptor L2"/>
    <property type="match status" value="1"/>
</dbReference>
<dbReference type="FunFam" id="2.60.120.740:FF:000001">
    <property type="entry name" value="Adhesion G protein-coupled receptor L2"/>
    <property type="match status" value="1"/>
</dbReference>
<dbReference type="FunFam" id="2.60.220.50:FF:000001">
    <property type="entry name" value="Adhesion G protein-coupled receptor L2"/>
    <property type="match status" value="1"/>
</dbReference>
<dbReference type="FunFam" id="4.10.1240.10:FF:000004">
    <property type="entry name" value="Adhesion G protein-coupled receptor L3"/>
    <property type="match status" value="1"/>
</dbReference>
<dbReference type="FunFam" id="1.25.40.610:FF:000003">
    <property type="entry name" value="adhesion G protein-coupled receptor L3"/>
    <property type="match status" value="1"/>
</dbReference>
<dbReference type="Gene3D" id="1.25.40.610">
    <property type="match status" value="1"/>
</dbReference>
<dbReference type="Gene3D" id="2.60.120.740">
    <property type="match status" value="1"/>
</dbReference>
<dbReference type="Gene3D" id="2.60.220.50">
    <property type="match status" value="1"/>
</dbReference>
<dbReference type="Gene3D" id="4.10.1240.10">
    <property type="entry name" value="GPCR, family 2, extracellular hormone receptor domain"/>
    <property type="match status" value="1"/>
</dbReference>
<dbReference type="Gene3D" id="1.20.1070.10">
    <property type="entry name" value="Rhodopsin 7-helix transmembrane proteins"/>
    <property type="match status" value="1"/>
</dbReference>
<dbReference type="InterPro" id="IPR057244">
    <property type="entry name" value="GAIN_B"/>
</dbReference>
<dbReference type="InterPro" id="IPR032471">
    <property type="entry name" value="GAIN_dom_N"/>
</dbReference>
<dbReference type="InterPro" id="IPR046338">
    <property type="entry name" value="GAIN_dom_sf"/>
</dbReference>
<dbReference type="InterPro" id="IPR017981">
    <property type="entry name" value="GPCR_2-like_7TM"/>
</dbReference>
<dbReference type="InterPro" id="IPR036445">
    <property type="entry name" value="GPCR_2_extracell_dom_sf"/>
</dbReference>
<dbReference type="InterPro" id="IPR001879">
    <property type="entry name" value="GPCR_2_extracellular_dom"/>
</dbReference>
<dbReference type="InterPro" id="IPR003924">
    <property type="entry name" value="GPCR_2_latrophilin"/>
</dbReference>
<dbReference type="InterPro" id="IPR003334">
    <property type="entry name" value="GPCR_2_latrophilin_rcpt_C"/>
</dbReference>
<dbReference type="InterPro" id="IPR000832">
    <property type="entry name" value="GPCR_2_secretin-like"/>
</dbReference>
<dbReference type="InterPro" id="IPR017983">
    <property type="entry name" value="GPCR_2_secretin-like_CS"/>
</dbReference>
<dbReference type="InterPro" id="IPR000203">
    <property type="entry name" value="GPS"/>
</dbReference>
<dbReference type="InterPro" id="IPR000922">
    <property type="entry name" value="Lectin_gal-bd_dom"/>
</dbReference>
<dbReference type="InterPro" id="IPR043159">
    <property type="entry name" value="Lectin_gal-bd_sf"/>
</dbReference>
<dbReference type="InterPro" id="IPR003112">
    <property type="entry name" value="Olfac-like_dom"/>
</dbReference>
<dbReference type="PANTHER" id="PTHR12011:SF60">
    <property type="entry name" value="ADHESION G PROTEIN-COUPLED RECEPTOR L3"/>
    <property type="match status" value="1"/>
</dbReference>
<dbReference type="PANTHER" id="PTHR12011">
    <property type="entry name" value="ADHESION G-PROTEIN COUPLED RECEPTOR"/>
    <property type="match status" value="1"/>
</dbReference>
<dbReference type="Pfam" id="PF00002">
    <property type="entry name" value="7tm_2"/>
    <property type="match status" value="1"/>
</dbReference>
<dbReference type="Pfam" id="PF16489">
    <property type="entry name" value="GAIN"/>
    <property type="match status" value="1"/>
</dbReference>
<dbReference type="Pfam" id="PF01825">
    <property type="entry name" value="GPS"/>
    <property type="match status" value="1"/>
</dbReference>
<dbReference type="Pfam" id="PF02793">
    <property type="entry name" value="HRM"/>
    <property type="match status" value="1"/>
</dbReference>
<dbReference type="Pfam" id="PF02354">
    <property type="entry name" value="Latrophilin"/>
    <property type="match status" value="2"/>
</dbReference>
<dbReference type="Pfam" id="PF02191">
    <property type="entry name" value="OLF"/>
    <property type="match status" value="1"/>
</dbReference>
<dbReference type="Pfam" id="PF02140">
    <property type="entry name" value="SUEL_Lectin"/>
    <property type="match status" value="1"/>
</dbReference>
<dbReference type="PRINTS" id="PR00249">
    <property type="entry name" value="GPCRSECRETIN"/>
</dbReference>
<dbReference type="PRINTS" id="PR01444">
    <property type="entry name" value="LATROPHILIN"/>
</dbReference>
<dbReference type="SMART" id="SM00303">
    <property type="entry name" value="GPS"/>
    <property type="match status" value="1"/>
</dbReference>
<dbReference type="SMART" id="SM00008">
    <property type="entry name" value="HormR"/>
    <property type="match status" value="1"/>
</dbReference>
<dbReference type="SMART" id="SM00284">
    <property type="entry name" value="OLF"/>
    <property type="match status" value="1"/>
</dbReference>
<dbReference type="SUPFAM" id="SSF81321">
    <property type="entry name" value="Family A G protein-coupled receptor-like"/>
    <property type="match status" value="1"/>
</dbReference>
<dbReference type="PROSITE" id="PS00650">
    <property type="entry name" value="G_PROTEIN_RECEP_F2_2"/>
    <property type="match status" value="1"/>
</dbReference>
<dbReference type="PROSITE" id="PS50227">
    <property type="entry name" value="G_PROTEIN_RECEP_F2_3"/>
    <property type="match status" value="1"/>
</dbReference>
<dbReference type="PROSITE" id="PS50261">
    <property type="entry name" value="G_PROTEIN_RECEP_F2_4"/>
    <property type="match status" value="1"/>
</dbReference>
<dbReference type="PROSITE" id="PS50221">
    <property type="entry name" value="GAIN_B"/>
    <property type="match status" value="1"/>
</dbReference>
<dbReference type="PROSITE" id="PS51132">
    <property type="entry name" value="OLF"/>
    <property type="match status" value="1"/>
</dbReference>
<dbReference type="PROSITE" id="PS50228">
    <property type="entry name" value="SUEL_LECTIN"/>
    <property type="match status" value="1"/>
</dbReference>
<name>AGRL3_RAT</name>
<accession>Q9Z173</accession>
<accession>O88924</accession>
<accession>O88925</accession>
<accession>O88926</accession>
<accession>O88927</accession>
<accession>O88928</accession>
<accession>O88929</accession>
<accession>Q4LDM4</accession>
<accession>Q4LDM5</accession>
<accession>Q4LDM6</accession>
<accession>Q4LDM7</accession>
<accession>Q4LDM8</accession>
<sequence length="1550" mass="172442">MCPPQLFILMMLLAPVVHGGKHNERHPALAAPLRHAEHSPGGPLPPRHLLQQPAAERSTAHRGQGPRGTARGVRGPGAPGAQIAAQAFSRAPIPMAVVRRELSCESYPIELRCPGTDVIMIESANYGRTDDKICDSDPAQMENIRCYLPDAYKIMSQRCNNRTQCAVVAGPDVFPDPCPGTYKYLEVQYECVPYKVEQKVFLCPGLLKGVYQSEHLFESDHQSGAWCKDPLQASDKIYYMPWTPYRTDTLTEYSSKDDFIAGRPTTTYKLPHRVDGTGFVVYDGALFFNKERTRNIVKFDLRTRIKSGEAIIANANYHDTSPYRWGGKSDIDLAVDENGLWVIYATEQNNGKIVISQLNPYTLRIEGTWDTAYDKRSASNAFMICGILYVVKSVYEDDDNEATGNKIDYIYNTDQSKDSLVDVPFPNSYQYIAAVDYNPRDNLLYVWNNYHVVKYSLDFGPLDSRSGPVHHGQVSYISPPIHLDSDLERPPVRGISTTGPLGMGSTTTSTTLRTTTWNLGRSTTPSLPGRRNRSTSTPSPAIEVLDVTTHLPSAASQIPAMEESCEAVEAREIMWFKTRQGQVAKQSCPAGTIGVSTYLCLAPDGIWDPQGPDLSNCSSPWVNHITQKLKSGETAANIARELAEQTRNHLNAGDITYSVRAMDQLVGLLDVQLRNLTPGGKDSAARSLNKLQKRERSCRAYVQAMVETVNNLLQPQALNAWRDLTTSDQLRAATMLLDTVEESAFVLADNLLKTDIVRENTDNIQLEVARLSTEGNLEDLKFPENTGHGSTIQLSANTLKQNGRNGEIRVAFVLYNNLGPYLSTENASMKLGTEAMSTNHSVIVNSPVITAAINKEFSNKVYLADPVVFTVKHIKQSEENFNPNCSFWSYSKRTMTGYWSTQGCRLLTTNKTHTTCSCNHLTNFAVLMAHVEVKHSDAVHDLLLDVITWVGILLSLVCLLICIFTFCFFRGLQSDRNTIHKNLCISLFVAELLFLIGINRTDQPIACAVFAALLHFFFLAAFTWMFLEGVQLYIMLVEVFESEHSRRKYFYLVGYGMPALIVAVSAAVDYRSYGTDKVCWLRLDTYFIWSFIGPATLIIMLNVIFLGIALYKMFHHTAILKPESGCLDNINYEDNRPFIKSWVIGAIALLCLLGLTWAFGLMYINESTVIMAYLFTIFNSLQGMFIFIFHCVLQKKVRKEYGKCLRTHCCSGKSTESSIGSGKTSGSRTPGRYSTGSQSRIRRMWNDTVRKQSESSFITGDINSSASLNRGSYLPCIQACVTYLEGLLNNARDTSVMDTLPLNGNHGNSYSIAGGEYLSNCVQIIDRGYNHNETALEKKILKELTSNYIPSYLNNHERSSEQNRNMMNKLVDNLGSGSEDDAIVLDDAASFNHEESLGLELIHEESDAPLLPPRVYSTDNHQPHHYSRRRLPQDHSESFFPLLTDEHTEDPQSPHRDSLYTSMPALAGVPAADSVTTSTQTEAAAAKGGDAEDVYYKSMPNLGSRNHVHPLHAYYQLGRGSSDGFIVPPNKDGASPEGTSKGPAHLVTSL</sequence>
<feature type="signal peptide" evidence="3">
    <location>
        <begin position="1"/>
        <end position="19"/>
    </location>
</feature>
<feature type="chain" id="PRO_0000270141" description="Adhesion G protein-coupled receptor L3">
    <location>
        <begin position="20"/>
        <end position="1550"/>
    </location>
</feature>
<feature type="topological domain" description="Extracellular" evidence="3">
    <location>
        <begin position="20"/>
        <end position="948"/>
    </location>
</feature>
<feature type="transmembrane region" description="Helical; Name=1" evidence="3">
    <location>
        <begin position="949"/>
        <end position="969"/>
    </location>
</feature>
<feature type="topological domain" description="Cytoplasmic" evidence="3">
    <location>
        <begin position="970"/>
        <end position="977"/>
    </location>
</feature>
<feature type="transmembrane region" description="Helical; Name=2" evidence="3">
    <location>
        <begin position="978"/>
        <end position="998"/>
    </location>
</feature>
<feature type="topological domain" description="Extracellular" evidence="3">
    <location>
        <begin position="999"/>
        <end position="1006"/>
    </location>
</feature>
<feature type="transmembrane region" description="Helical; Name=3" evidence="3">
    <location>
        <begin position="1007"/>
        <end position="1027"/>
    </location>
</feature>
<feature type="topological domain" description="Cytoplasmic" evidence="3">
    <location>
        <begin position="1028"/>
        <end position="1048"/>
    </location>
</feature>
<feature type="transmembrane region" description="Helical; Name=4" evidence="3">
    <location>
        <begin position="1049"/>
        <end position="1069"/>
    </location>
</feature>
<feature type="topological domain" description="Extracellular" evidence="3">
    <location>
        <begin position="1070"/>
        <end position="1087"/>
    </location>
</feature>
<feature type="transmembrane region" description="Helical; Name=5" evidence="3">
    <location>
        <begin position="1088"/>
        <end position="1108"/>
    </location>
</feature>
<feature type="topological domain" description="Cytoplasmic" evidence="3">
    <location>
        <begin position="1109"/>
        <end position="1141"/>
    </location>
</feature>
<feature type="transmembrane region" description="Helical; Name=6" evidence="3">
    <location>
        <begin position="1142"/>
        <end position="1162"/>
    </location>
</feature>
<feature type="topological domain" description="Extracellular" evidence="3">
    <location>
        <begin position="1163"/>
        <end position="1168"/>
    </location>
</feature>
<feature type="transmembrane region" description="Helical; Name=7" evidence="3">
    <location>
        <begin position="1169"/>
        <end position="1189"/>
    </location>
</feature>
<feature type="topological domain" description="Cytoplasmic" evidence="3">
    <location>
        <begin position="1190"/>
        <end position="1550"/>
    </location>
</feature>
<feature type="domain" description="SUEL-type lectin" evidence="5">
    <location>
        <begin position="103"/>
        <end position="192"/>
    </location>
</feature>
<feature type="domain" description="Olfactomedin-like" evidence="6">
    <location>
        <begin position="202"/>
        <end position="461"/>
    </location>
</feature>
<feature type="domain" description="GAIN-B" evidence="4">
    <location>
        <begin position="755"/>
        <end position="934"/>
    </location>
</feature>
<feature type="region of interest" description="Disordered" evidence="7">
    <location>
        <begin position="34"/>
        <end position="80"/>
    </location>
</feature>
<feature type="region of interest" description="Interaction with FLRT3" evidence="2">
    <location>
        <begin position="317"/>
        <end position="347"/>
    </location>
</feature>
<feature type="region of interest" description="Disordered" evidence="7">
    <location>
        <begin position="518"/>
        <end position="538"/>
    </location>
</feature>
<feature type="region of interest" description="GPS" evidence="4">
    <location>
        <begin position="885"/>
        <end position="934"/>
    </location>
</feature>
<feature type="region of interest" description="Stachel" evidence="2">
    <location>
        <begin position="922"/>
        <end position="938"/>
    </location>
</feature>
<feature type="region of interest" description="Disordered" evidence="7">
    <location>
        <begin position="1213"/>
        <end position="1236"/>
    </location>
</feature>
<feature type="region of interest" description="Disordered" evidence="7">
    <location>
        <begin position="1410"/>
        <end position="1435"/>
    </location>
</feature>
<feature type="region of interest" description="Disordered" evidence="7">
    <location>
        <begin position="1528"/>
        <end position="1550"/>
    </location>
</feature>
<feature type="short sequence motif" description="PDZ-binding" evidence="1">
    <location>
        <begin position="1545"/>
        <end position="1550"/>
    </location>
</feature>
<feature type="binding site" evidence="1">
    <location>
        <position position="332"/>
    </location>
    <ligand>
        <name>Ca(2+)</name>
        <dbReference type="ChEBI" id="CHEBI:29108"/>
    </ligand>
</feature>
<feature type="binding site" evidence="1">
    <location>
        <position position="380"/>
    </location>
    <ligand>
        <name>Ca(2+)</name>
        <dbReference type="ChEBI" id="CHEBI:29108"/>
    </ligand>
</feature>
<feature type="binding site" evidence="1">
    <location>
        <position position="381"/>
    </location>
    <ligand>
        <name>Ca(2+)</name>
        <dbReference type="ChEBI" id="CHEBI:29108"/>
    </ligand>
</feature>
<feature type="binding site">
    <location>
        <position position="435"/>
    </location>
    <ligand>
        <name>Ca(2+)</name>
        <dbReference type="ChEBI" id="CHEBI:29108"/>
    </ligand>
</feature>
<feature type="site" description="Cleavage; by autolysis" evidence="4">
    <location>
        <begin position="921"/>
        <end position="922"/>
    </location>
</feature>
<feature type="modified residue" description="Phosphoserine" evidence="1">
    <location>
        <position position="1253"/>
    </location>
</feature>
<feature type="modified residue" description="Phosphoserine" evidence="1">
    <location>
        <position position="1535"/>
    </location>
</feature>
<feature type="glycosylation site" description="N-linked (GlcNAc...) asparagine" evidence="3">
    <location>
        <position position="161"/>
    </location>
</feature>
<feature type="glycosylation site" description="N-linked (GlcNAc...) asparagine" evidence="3">
    <location>
        <position position="532"/>
    </location>
</feature>
<feature type="glycosylation site" description="N-linked (GlcNAc...) asparagine" evidence="3">
    <location>
        <position position="616"/>
    </location>
</feature>
<feature type="glycosylation site" description="N-linked (GlcNAc...) asparagine" evidence="3">
    <location>
        <position position="839"/>
    </location>
</feature>
<feature type="glycosylation site" description="N-linked (GlcNAc...) asparagine" evidence="3">
    <location>
        <position position="884"/>
    </location>
</feature>
<feature type="glycosylation site" description="N-linked (GlcNAc...) asparagine" evidence="3">
    <location>
        <position position="910"/>
    </location>
</feature>
<feature type="glycosylation site" description="N-linked (GlcNAc...) asparagine" evidence="3">
    <location>
        <position position="999"/>
    </location>
</feature>
<feature type="glycosylation site" description="N-linked (GlcNAc...) asparagine" evidence="3">
    <location>
        <position position="1165"/>
    </location>
</feature>
<feature type="disulfide bond" evidence="1">
    <location>
        <begin position="104"/>
        <end position="134"/>
    </location>
</feature>
<feature type="disulfide bond" evidence="1">
    <location>
        <begin position="113"/>
        <end position="191"/>
    </location>
</feature>
<feature type="disulfide bond" evidence="1">
    <location>
        <begin position="146"/>
        <end position="178"/>
    </location>
</feature>
<feature type="disulfide bond" evidence="1">
    <location>
        <begin position="159"/>
        <end position="165"/>
    </location>
</feature>
<feature type="disulfide bond" evidence="6">
    <location>
        <begin position="203"/>
        <end position="385"/>
    </location>
</feature>
<feature type="disulfide bond" evidence="4">
    <location>
        <begin position="885"/>
        <end position="916"/>
    </location>
</feature>
<feature type="disulfide bond" evidence="4">
    <location>
        <begin position="904"/>
        <end position="918"/>
    </location>
</feature>
<feature type="splice variant" id="VSP_022127" description="In isoform 2, isoform 5 and isoform 7." evidence="10">
    <location>
        <begin position="19"/>
        <end position="86"/>
    </location>
</feature>
<feature type="splice variant" id="VSP_022128" description="In isoform 2, isoform 3, isoform 4, isoform 5, isoform 6 and isoform 7." evidence="10">
    <location>
        <begin position="1131"/>
        <end position="1139"/>
    </location>
</feature>
<feature type="splice variant" id="VSP_022129" description="In isoform 4 and isoform 5." evidence="10">
    <original>GSYLPCIQACVTYLEGLLNNARDTSVMDTLPLNGNHG</original>
    <variation>EPYRETSMGVKLNIAYQIGASEQCQGYKCHGYSTTEW</variation>
    <location>
        <begin position="1271"/>
        <end position="1307"/>
    </location>
</feature>
<feature type="splice variant" id="VSP_022130" description="In isoform 2 and isoform 3." evidence="10">
    <location>
        <begin position="1271"/>
        <end position="1284"/>
    </location>
</feature>
<feature type="splice variant" id="VSP_022131" description="In isoform 6 and isoform 7." evidence="10">
    <original>SYLPCIQACVTYLEGLLNNARDTSVMDTLPLNGNHGNSYSIAGGEYLSNCVQIIDRGYNHNETALEKKILKELTSNYIP</original>
    <variation>TMANHLMSNALLRPHGTNNPYNTLLGEPAVCNNPSISMYNAQEPYRETSMGVKLNIAYQIGASEQCQGYKCHGYSTTEW</variation>
    <location>
        <begin position="1272"/>
        <end position="1350"/>
    </location>
</feature>
<feature type="splice variant" id="VSP_022132" description="In isoform 4 and isoform 5." evidence="10">
    <location>
        <begin position="1308"/>
        <end position="1550"/>
    </location>
</feature>
<feature type="splice variant" id="VSP_022133" description="In isoform 6 and isoform 7." evidence="10">
    <location>
        <begin position="1351"/>
        <end position="1550"/>
    </location>
</feature>
<evidence type="ECO:0000250" key="1">
    <source>
        <dbReference type="UniProtKB" id="Q80TS3"/>
    </source>
</evidence>
<evidence type="ECO:0000250" key="2">
    <source>
        <dbReference type="UniProtKB" id="Q9HAR2"/>
    </source>
</evidence>
<evidence type="ECO:0000255" key="3"/>
<evidence type="ECO:0000255" key="4">
    <source>
        <dbReference type="PROSITE-ProRule" id="PRU00098"/>
    </source>
</evidence>
<evidence type="ECO:0000255" key="5">
    <source>
        <dbReference type="PROSITE-ProRule" id="PRU00260"/>
    </source>
</evidence>
<evidence type="ECO:0000255" key="6">
    <source>
        <dbReference type="PROSITE-ProRule" id="PRU00446"/>
    </source>
</evidence>
<evidence type="ECO:0000256" key="7">
    <source>
        <dbReference type="SAM" id="MobiDB-lite"/>
    </source>
</evidence>
<evidence type="ECO:0000269" key="8">
    <source>
    </source>
</evidence>
<evidence type="ECO:0000303" key="9">
    <source>
    </source>
</evidence>
<evidence type="ECO:0000303" key="10">
    <source>
    </source>
</evidence>
<evidence type="ECO:0000305" key="11"/>
<evidence type="ECO:0000312" key="12">
    <source>
        <dbReference type="RGD" id="620836"/>
    </source>
</evidence>
<protein>
    <recommendedName>
        <fullName evidence="12">Adhesion G protein-coupled receptor L3</fullName>
    </recommendedName>
    <alternativeName>
        <fullName evidence="9">Calcium-independent alpha-latrotoxin receptor 3</fullName>
        <shortName evidence="9">CIRL-3</shortName>
    </alternativeName>
    <alternativeName>
        <fullName evidence="12">Latrophilin-3</fullName>
    </alternativeName>
</protein>
<organism>
    <name type="scientific">Rattus norvegicus</name>
    <name type="common">Rat</name>
    <dbReference type="NCBI Taxonomy" id="10116"/>
    <lineage>
        <taxon>Eukaryota</taxon>
        <taxon>Metazoa</taxon>
        <taxon>Chordata</taxon>
        <taxon>Craniata</taxon>
        <taxon>Vertebrata</taxon>
        <taxon>Euteleostomi</taxon>
        <taxon>Mammalia</taxon>
        <taxon>Eutheria</taxon>
        <taxon>Euarchontoglires</taxon>
        <taxon>Glires</taxon>
        <taxon>Rodentia</taxon>
        <taxon>Myomorpha</taxon>
        <taxon>Muroidea</taxon>
        <taxon>Muridae</taxon>
        <taxon>Murinae</taxon>
        <taxon>Rattus</taxon>
    </lineage>
</organism>
<comment type="function">
    <text evidence="1">Orphan adhesion G-protein coupled receptor (aGPCR), which mediates synapse specificity. Ligand binding causes a conformation change that triggers signaling via guanine nucleotide-binding proteins (G proteins) and modulates the activity of downstream effectors. ADGRL3 is coupled with different classes of G alpha proteins, such as G(12)/G(13), G(s), G(i) or G(q), depending on the context. Coupling to G(12)/G(13) G proteins, which mediates the activation Rho small GTPases is the most efficient. Following G-protein coupled receptor activation, associates with cell adhesion molecules that are expressed at the surface of adjacent cells to direct synapse specificity. Specifically mediates the establishment of Schaffer-collateral synapses formed by CA3-region axons on CA1-region pyramidal neurons in the hippocampus. Localizes to postsynaptic spines in excitatory synapses in the S.oriens and S.radiatum and interacts with presynaptic cell adhesion molecules FLRT3 and TENM2, promoting synapse formation. Plays a role in the development of glutamatergic synapses in the cortex. Important in determining the connectivity rates between the principal neurons in the cortex.</text>
</comment>
<comment type="function">
    <molecule>Isoform 1</molecule>
    <text evidence="1">Orphan adhesion G-protein coupled receptor (aGPCR), which mediates synapse specificity. Ligand binding causes a conformation change that triggers signaling via guanine nucleotide-binding proteins (G proteins) and modulates the activity of downstream effectors, such as adenylate cyclase. Isoform 1 is specifically coupled to G(s) G proteins and mediates activation of adenylate cyclase activity. Following G-protein coupled receptor activation, undergoes liquid-liquid phase transition, associates with (1) cell adhesion molecules that are expressed at the surface of adjacent cells, as well as (2) PDZ-containing proteins, such as SHANK3 and DLG4, in the cytoplasm to direct synapse formation.</text>
</comment>
<comment type="activity regulation">
    <text evidence="1 2">Forms a heterodimer of 2 chains generated by proteolytic processing that remain associated through non-covalent interactions mediated by the GAIN-B domain (By similarity). In the inactivated receptor, the Stachel sequence (also named stalk) is embedded in the GAIN-B domain, where it adopts a beta-strand conformation. On activation, the Stachel moves into the 7 transmembrane region and adopts a twisted hook-shaped configuration that forms contacts within the receptor, leading to coupling of a G-alpha protein, which activates signaling. The cleaved GAIN-B and N-terminal domains can then dissociate from the rest of the receptor (By similarity).</text>
</comment>
<comment type="subunit">
    <text evidence="1 2 4">Heterodimer of 2 chains generated by proteolytic processing; the large extracellular N-terminal fragment and the membrane-bound C-terminal fragment predominantly remain associated and non-covalently linked (By similarity). Interacts (via olfactomedin-like domain) with FLRT1 (via extracellular domain). Interacts (via olfactomedin-like domain) with FLRT2 (via extracellular domain). Interacts (via olfactomedin-like domain) with FLRT3 (via extracellular domain); the interaction is direct. Interacts (via extracellular domain) with TENM1. Interacts (via extracellular domain) with TENM2. Interacts (via extracellular domain) with TENM3 (By similarity). Identified in a complex with FLRT3 and UNC5B; does not interact with UNC5B by itself. Identified in a complex with FLRT3 and UNC5D; does not interact with UNC5D by itself (By similarity).</text>
</comment>
<comment type="subunit">
    <molecule>Isoform 1</molecule>
    <text evidence="1">Interacts (via PDZ-binding motif) with SHANK3. Interacts (via PDZ-binding motif) with DLG4.</text>
</comment>
<comment type="subcellular location">
    <subcellularLocation>
        <location evidence="1">Cell membrane</location>
        <topology evidence="3">Multi-pass membrane protein</topology>
    </subcellularLocation>
    <subcellularLocation>
        <location evidence="1">Postsynaptic cell membrane</location>
        <topology evidence="3">Multi-pass membrane protein</topology>
    </subcellularLocation>
    <subcellularLocation>
        <location evidence="1">Cell projection</location>
        <location evidence="1">Axon</location>
    </subcellularLocation>
    <subcellularLocation>
        <location evidence="1">Cell junction</location>
    </subcellularLocation>
</comment>
<comment type="alternative products">
    <event type="alternative splicing"/>
    <isoform>
        <id>Q9Z173-1</id>
        <name>1</name>
        <sequence type="displayed"/>
    </isoform>
    <isoform>
        <id>Q9Z173-2</id>
        <name>2</name>
        <name>CL3AA</name>
        <sequence type="described" ref="VSP_022127 VSP_022128 VSP_022130"/>
    </isoform>
    <isoform>
        <id>Q9Z173-3</id>
        <name>3</name>
        <sequence type="described" ref="VSP_022128 VSP_022130"/>
    </isoform>
    <isoform>
        <id>Q9Z173-4</id>
        <name>4</name>
        <name>CL3BB</name>
        <sequence type="described" ref="VSP_022128 VSP_022129 VSP_022132"/>
    </isoform>
    <isoform>
        <id>Q9Z173-5</id>
        <name>5</name>
        <name>CL3AB</name>
        <sequence type="described" ref="VSP_022127 VSP_022128 VSP_022129 VSP_022132"/>
    </isoform>
    <isoform>
        <id>Q9Z173-6</id>
        <name>6</name>
        <name>CL3BC</name>
        <sequence type="described" ref="VSP_022128 VSP_022131 VSP_022133"/>
    </isoform>
    <isoform>
        <id>Q9Z173-7</id>
        <name>7</name>
        <name>CL3AC</name>
        <sequence type="described" ref="VSP_022127 VSP_022128 VSP_022131 VSP_022133"/>
    </isoform>
</comment>
<comment type="tissue specificity">
    <text evidence="8">Predominantly expressed in brain, followed by heart, placenta, pancreas, kidney and testis.</text>
</comment>
<comment type="domain">
    <text evidence="2">The Stachel sequence (also named stalk) in the C-terminal part of the extracellular domain (ECD) functions as a tethered agonist. In the inactivated receptor, the Stachel sequence (also named stalk) is embedded in the GAIN-B domain, where it adopts a beta-strand conformation. On activation, the Stachel moves into the 7 transmembrane region and adopts a twisted hook-shaped configuration that forms contacts within the receptor, leading to coupling of a G-alpha protein, which activates signaling.</text>
</comment>
<comment type="domain">
    <text evidence="1">The Olfactomedin-like domain is required for the synapse-promoting function and the interaction with FLRT3. The Olfactomedin-like and the SUEL-type lectin domains are required for the interaction with TENM1.</text>
</comment>
<comment type="PTM">
    <text evidence="1 4">Autoproteolytically processed at the GPS region of the GAIN-B domain; this cleavage modulates receptor activity.</text>
</comment>
<comment type="similarity">
    <text evidence="11">Belongs to the G-protein coupled receptor 2 family. LN-TM7 subfamily.</text>
</comment>